<comment type="function">
    <text evidence="1 3">Dermonecrotic toxins cleave the phosphodiester linkage between the phosphate and headgroup of certain phospholipids (sphingolipid and lysolipid substrates), forming an alcohol (often choline) and a cyclic phosphate (By similarity). This toxin acts on sphingomyelin (SM) (By similarity). It may also act on ceramide phosphoethanolamine (CPE), lysophosphatidylcholine (LPC) and lysophosphatidylethanolamine (LPE), but not on lysophosphatidylserine (LPS), and lysophosphatidylglycerol (LPG) (By similarity). It acts by transphosphatidylation, releasing exclusively cyclic phosphate products as second products (By similarity). Induces dermonecrosis, hemolysis, increased vascular permeability, edema, inflammatory response, and platelet aggregation (By similarity).</text>
</comment>
<comment type="catalytic activity">
    <reaction evidence="1">
        <text>an N-(acyl)-sphingosylphosphocholine = an N-(acyl)-sphingosyl-1,3-cyclic phosphate + choline</text>
        <dbReference type="Rhea" id="RHEA:60652"/>
        <dbReference type="ChEBI" id="CHEBI:15354"/>
        <dbReference type="ChEBI" id="CHEBI:64583"/>
        <dbReference type="ChEBI" id="CHEBI:143892"/>
    </reaction>
</comment>
<comment type="catalytic activity">
    <reaction evidence="1">
        <text>an N-(acyl)-sphingosylphosphoethanolamine = an N-(acyl)-sphingosyl-1,3-cyclic phosphate + ethanolamine</text>
        <dbReference type="Rhea" id="RHEA:60648"/>
        <dbReference type="ChEBI" id="CHEBI:57603"/>
        <dbReference type="ChEBI" id="CHEBI:143891"/>
        <dbReference type="ChEBI" id="CHEBI:143892"/>
    </reaction>
</comment>
<comment type="catalytic activity">
    <reaction evidence="1">
        <text>a 1-acyl-sn-glycero-3-phosphocholine = a 1-acyl-sn-glycero-2,3-cyclic phosphate + choline</text>
        <dbReference type="Rhea" id="RHEA:60700"/>
        <dbReference type="ChEBI" id="CHEBI:15354"/>
        <dbReference type="ChEBI" id="CHEBI:58168"/>
        <dbReference type="ChEBI" id="CHEBI:143947"/>
    </reaction>
</comment>
<comment type="catalytic activity">
    <reaction evidence="1">
        <text>a 1-acyl-sn-glycero-3-phosphoethanolamine = a 1-acyl-sn-glycero-2,3-cyclic phosphate + ethanolamine</text>
        <dbReference type="Rhea" id="RHEA:60704"/>
        <dbReference type="ChEBI" id="CHEBI:57603"/>
        <dbReference type="ChEBI" id="CHEBI:64381"/>
        <dbReference type="ChEBI" id="CHEBI:143947"/>
    </reaction>
</comment>
<comment type="cofactor">
    <cofactor evidence="5">
        <name>Mg(2+)</name>
        <dbReference type="ChEBI" id="CHEBI:18420"/>
    </cofactor>
    <text evidence="5">Binds 1 Mg(2+) ion per subunit.</text>
</comment>
<comment type="subcellular location">
    <subcellularLocation>
        <location evidence="8">Secreted</location>
    </subcellularLocation>
</comment>
<comment type="tissue specificity">
    <text evidence="8">Expressed by the venom gland.</text>
</comment>
<comment type="similarity">
    <text evidence="7">Belongs to the arthropod phospholipase D family. Class II subfamily.</text>
</comment>
<comment type="caution">
    <text evidence="1 2 4">The most common activity assay for dermonecrotic toxins detects enzymatic activity by monitoring choline release from substrate. Liberation of choline from sphingomyelin (SM) or lysophosphatidylcholine (LPC) is commonly assumed to result from substrate hydrolysis, giving either ceramide-1-phosphate (C1P) or lysophosphatidic acid (LPA), respectively, as a second product. However, two studies from Lajoie and colleagues (2013 and 2015) report the observation of exclusive formation of cyclic phosphate products as second products, resulting from intramolecular transphosphatidylation. Cyclic phosphates have vastly different biological properties from their monoester counterparts, and they may be relevant to the pathology of brown spider envenomation.</text>
</comment>
<evidence type="ECO:0000250" key="1">
    <source>
        <dbReference type="UniProtKB" id="A0A0D4WTV1"/>
    </source>
</evidence>
<evidence type="ECO:0000250" key="2">
    <source>
        <dbReference type="UniProtKB" id="A0A0D4WV12"/>
    </source>
</evidence>
<evidence type="ECO:0000250" key="3">
    <source>
        <dbReference type="UniProtKB" id="P0CE80"/>
    </source>
</evidence>
<evidence type="ECO:0000250" key="4">
    <source>
        <dbReference type="UniProtKB" id="Q4ZFU2"/>
    </source>
</evidence>
<evidence type="ECO:0000250" key="5">
    <source>
        <dbReference type="UniProtKB" id="Q8I914"/>
    </source>
</evidence>
<evidence type="ECO:0000303" key="6">
    <source>
    </source>
</evidence>
<evidence type="ECO:0000305" key="7"/>
<evidence type="ECO:0000305" key="8">
    <source>
    </source>
</evidence>
<sequence>MGHMVNAIYQIDEFVNLGANSIETDVSFDDNANPEYTYRGIPCDCGRSCLKWENYNDFLKGLRSATTPGNSKYQSKLILVVFDLKTGSLYDNQASEAGKKLAKNLLKHYWNNGNNGGRAYIVLSIPDLNHYPLIKGFTDTLKQEGHPELLEKVGYDFSGNDAIGDVAKAYKKAGVSGHVWQSDGITNCLLRGLSRVKDAVANRDSGKGYINKVYYWTVDKRATTRDALDAGVDGVMTNYPDVIADVMNEAAYKNKVRLATYEDSPWVTFKK</sequence>
<reference key="1">
    <citation type="journal article" date="2009" name="Mol. Biol. Evol.">
        <title>Molecular evolution, functional variation, and proposed nomenclature of the gene family that includes sphingomyelinase D in sicariid spider venoms.</title>
        <authorList>
            <person name="Binford G.J."/>
            <person name="Bodner M.R."/>
            <person name="Cordes M.H."/>
            <person name="Baldwin K.L."/>
            <person name="Rynerson M.R."/>
            <person name="Burns S.N."/>
            <person name="Zobel-Thropp P.A."/>
        </authorList>
    </citation>
    <scope>NUCLEOTIDE SEQUENCE [MRNA]</scope>
    <scope>NOMENCLATURE</scope>
    <source>
        <tissue>Venom gland</tissue>
    </source>
</reference>
<accession>C0JAS3</accession>
<proteinExistence type="evidence at transcript level"/>
<feature type="chain" id="PRO_0000392761" description="Dermonecrotic toxin LhSicTox-alphaIA2bv">
    <location>
        <begin position="1" status="less than"/>
        <end position="271"/>
    </location>
</feature>
<feature type="active site" evidence="5">
    <location>
        <position position="3"/>
    </location>
</feature>
<feature type="binding site" evidence="5">
    <location>
        <position position="23"/>
    </location>
    <ligand>
        <name>Mg(2+)</name>
        <dbReference type="ChEBI" id="CHEBI:18420"/>
    </ligand>
</feature>
<feature type="binding site" evidence="5">
    <location>
        <position position="25"/>
    </location>
    <ligand>
        <name>Mg(2+)</name>
        <dbReference type="ChEBI" id="CHEBI:18420"/>
    </ligand>
</feature>
<feature type="binding site" evidence="5">
    <location>
        <position position="83"/>
    </location>
    <ligand>
        <name>Mg(2+)</name>
        <dbReference type="ChEBI" id="CHEBI:18420"/>
    </ligand>
</feature>
<feature type="disulfide bond" evidence="3">
    <location>
        <begin position="43"/>
        <end position="49"/>
    </location>
</feature>
<feature type="disulfide bond" evidence="3">
    <location>
        <begin position="45"/>
        <end position="188"/>
    </location>
</feature>
<feature type="non-terminal residue">
    <location>
        <position position="1"/>
    </location>
</feature>
<name>A1IB5_LOXHI</name>
<protein>
    <recommendedName>
        <fullName evidence="6">Dermonecrotic toxin LhSicTox-alphaIA2bv</fullName>
        <ecNumber evidence="4">4.6.1.-</ecNumber>
    </recommendedName>
    <alternativeName>
        <fullName>Phospholipase D</fullName>
        <shortName>PLD</shortName>
    </alternativeName>
    <alternativeName>
        <fullName>Sphingomyelin phosphodiesterase D</fullName>
        <shortName>SMD</shortName>
        <shortName>SMase D</shortName>
        <shortName>Sphingomyelinase D</shortName>
    </alternativeName>
</protein>
<organism>
    <name type="scientific">Loxosceles hirsuta</name>
    <name type="common">Recluse spider</name>
    <dbReference type="NCBI Taxonomy" id="571525"/>
    <lineage>
        <taxon>Eukaryota</taxon>
        <taxon>Metazoa</taxon>
        <taxon>Ecdysozoa</taxon>
        <taxon>Arthropoda</taxon>
        <taxon>Chelicerata</taxon>
        <taxon>Arachnida</taxon>
        <taxon>Araneae</taxon>
        <taxon>Araneomorphae</taxon>
        <taxon>Haplogynae</taxon>
        <taxon>Scytodoidea</taxon>
        <taxon>Sicariidae</taxon>
        <taxon>Loxosceles</taxon>
    </lineage>
</organism>
<keyword id="KW-0204">Cytolysis</keyword>
<keyword id="KW-1061">Dermonecrotic toxin</keyword>
<keyword id="KW-1015">Disulfide bond</keyword>
<keyword id="KW-0354">Hemolysis</keyword>
<keyword id="KW-0442">Lipid degradation</keyword>
<keyword id="KW-0443">Lipid metabolism</keyword>
<keyword id="KW-0456">Lyase</keyword>
<keyword id="KW-0460">Magnesium</keyword>
<keyword id="KW-0479">Metal-binding</keyword>
<keyword id="KW-0964">Secreted</keyword>
<keyword id="KW-0800">Toxin</keyword>
<dbReference type="EC" id="4.6.1.-" evidence="4"/>
<dbReference type="EMBL" id="FJ171358">
    <property type="protein sequence ID" value="ACN48854.1"/>
    <property type="molecule type" value="mRNA"/>
</dbReference>
<dbReference type="SMR" id="C0JAS3"/>
<dbReference type="GO" id="GO:0005576">
    <property type="term" value="C:extracellular region"/>
    <property type="evidence" value="ECO:0007669"/>
    <property type="project" value="UniProtKB-SubCell"/>
</dbReference>
<dbReference type="GO" id="GO:0016829">
    <property type="term" value="F:lyase activity"/>
    <property type="evidence" value="ECO:0007669"/>
    <property type="project" value="UniProtKB-KW"/>
</dbReference>
<dbReference type="GO" id="GO:0046872">
    <property type="term" value="F:metal ion binding"/>
    <property type="evidence" value="ECO:0007669"/>
    <property type="project" value="UniProtKB-KW"/>
</dbReference>
<dbReference type="GO" id="GO:0008081">
    <property type="term" value="F:phosphoric diester hydrolase activity"/>
    <property type="evidence" value="ECO:0007669"/>
    <property type="project" value="InterPro"/>
</dbReference>
<dbReference type="GO" id="GO:0090729">
    <property type="term" value="F:toxin activity"/>
    <property type="evidence" value="ECO:0007669"/>
    <property type="project" value="UniProtKB-KW"/>
</dbReference>
<dbReference type="GO" id="GO:0031640">
    <property type="term" value="P:killing of cells of another organism"/>
    <property type="evidence" value="ECO:0007669"/>
    <property type="project" value="UniProtKB-KW"/>
</dbReference>
<dbReference type="GO" id="GO:0016042">
    <property type="term" value="P:lipid catabolic process"/>
    <property type="evidence" value="ECO:0007669"/>
    <property type="project" value="UniProtKB-KW"/>
</dbReference>
<dbReference type="CDD" id="cd08576">
    <property type="entry name" value="GDPD_like_SMaseD_PLD"/>
    <property type="match status" value="1"/>
</dbReference>
<dbReference type="Gene3D" id="3.20.20.190">
    <property type="entry name" value="Phosphatidylinositol (PI) phosphodiesterase"/>
    <property type="match status" value="1"/>
</dbReference>
<dbReference type="InterPro" id="IPR017946">
    <property type="entry name" value="PLC-like_Pdiesterase_TIM-brl"/>
</dbReference>
<dbReference type="Pfam" id="PF13653">
    <property type="entry name" value="GDPD_2"/>
    <property type="match status" value="1"/>
</dbReference>
<dbReference type="SUPFAM" id="SSF51695">
    <property type="entry name" value="PLC-like phosphodiesterases"/>
    <property type="match status" value="1"/>
</dbReference>